<gene>
    <name evidence="1" type="primary">zapB</name>
    <name type="ordered locus">SPAB_05064</name>
</gene>
<name>ZAPB_SALPB</name>
<proteinExistence type="inferred from homology"/>
<protein>
    <recommendedName>
        <fullName evidence="1">Cell division protein ZapB</fullName>
    </recommendedName>
</protein>
<sequence length="79" mass="9312">MSLEVFEKLEAKVQQAIDTITLLQMEIEELKEKNNSLTQEVQSAQHQREELERENNSLKEQQSGWQERLQALLGRMEEV</sequence>
<feature type="chain" id="PRO_0000333917" description="Cell division protein ZapB">
    <location>
        <begin position="1"/>
        <end position="79"/>
    </location>
</feature>
<feature type="region of interest" description="Disordered" evidence="2">
    <location>
        <begin position="36"/>
        <end position="63"/>
    </location>
</feature>
<feature type="coiled-coil region" evidence="1">
    <location>
        <begin position="3"/>
        <end position="79"/>
    </location>
</feature>
<feature type="compositionally biased region" description="Polar residues" evidence="2">
    <location>
        <begin position="36"/>
        <end position="45"/>
    </location>
</feature>
<feature type="compositionally biased region" description="Basic and acidic residues" evidence="2">
    <location>
        <begin position="46"/>
        <end position="57"/>
    </location>
</feature>
<comment type="function">
    <text evidence="1">Non-essential, abundant cell division factor that is required for proper Z-ring formation. It is recruited early to the divisome by direct interaction with FtsZ, stimulating Z-ring assembly and thereby promoting cell division earlier in the cell cycle. Its recruitment to the Z-ring requires functional FtsA or ZipA.</text>
</comment>
<comment type="subunit">
    <text evidence="1">Homodimer. The ends of the coiled-coil dimer bind to each other, forming polymers. Interacts with FtsZ.</text>
</comment>
<comment type="subcellular location">
    <subcellularLocation>
        <location>Cytoplasm</location>
    </subcellularLocation>
    <text evidence="1">Localizes to the septum at mid-cell, in a FtsZ-like pattern.</text>
</comment>
<comment type="similarity">
    <text evidence="1">Belongs to the ZapB family.</text>
</comment>
<reference key="1">
    <citation type="submission" date="2007-11" db="EMBL/GenBank/DDBJ databases">
        <authorList>
            <consortium name="The Salmonella enterica serovar Paratyphi B Genome Sequencing Project"/>
            <person name="McClelland M."/>
            <person name="Sanderson E.K."/>
            <person name="Porwollik S."/>
            <person name="Spieth J."/>
            <person name="Clifton W.S."/>
            <person name="Fulton R."/>
            <person name="Cordes M."/>
            <person name="Wollam A."/>
            <person name="Shah N."/>
            <person name="Pepin K."/>
            <person name="Bhonagiri V."/>
            <person name="Nash W."/>
            <person name="Johnson M."/>
            <person name="Thiruvilangam P."/>
            <person name="Wilson R."/>
        </authorList>
    </citation>
    <scope>NUCLEOTIDE SEQUENCE [LARGE SCALE GENOMIC DNA]</scope>
    <source>
        <strain>ATCC BAA-1250 / SPB7</strain>
    </source>
</reference>
<dbReference type="EMBL" id="CP000886">
    <property type="protein sequence ID" value="ABX70355.1"/>
    <property type="molecule type" value="Genomic_DNA"/>
</dbReference>
<dbReference type="RefSeq" id="WP_000051370.1">
    <property type="nucleotide sequence ID" value="NC_010102.1"/>
</dbReference>
<dbReference type="SMR" id="A9MZH7"/>
<dbReference type="KEGG" id="spq:SPAB_05064"/>
<dbReference type="PATRIC" id="fig|1016998.12.peg.4753"/>
<dbReference type="HOGENOM" id="CLU_171174_2_0_6"/>
<dbReference type="BioCyc" id="SENT1016998:SPAB_RS20610-MONOMER"/>
<dbReference type="Proteomes" id="UP000008556">
    <property type="component" value="Chromosome"/>
</dbReference>
<dbReference type="GO" id="GO:0005737">
    <property type="term" value="C:cytoplasm"/>
    <property type="evidence" value="ECO:0007669"/>
    <property type="project" value="UniProtKB-SubCell"/>
</dbReference>
<dbReference type="GO" id="GO:0000917">
    <property type="term" value="P:division septum assembly"/>
    <property type="evidence" value="ECO:0007669"/>
    <property type="project" value="UniProtKB-KW"/>
</dbReference>
<dbReference type="GO" id="GO:0043093">
    <property type="term" value="P:FtsZ-dependent cytokinesis"/>
    <property type="evidence" value="ECO:0007669"/>
    <property type="project" value="UniProtKB-UniRule"/>
</dbReference>
<dbReference type="FunFam" id="1.20.5.340:FF:000014">
    <property type="entry name" value="Cell division protein ZapB"/>
    <property type="match status" value="1"/>
</dbReference>
<dbReference type="Gene3D" id="1.20.5.340">
    <property type="match status" value="1"/>
</dbReference>
<dbReference type="HAMAP" id="MF_01196">
    <property type="entry name" value="ZapB"/>
    <property type="match status" value="1"/>
</dbReference>
<dbReference type="InterPro" id="IPR009252">
    <property type="entry name" value="Cell_div_ZapB"/>
</dbReference>
<dbReference type="NCBIfam" id="NF011951">
    <property type="entry name" value="PRK15422.1"/>
    <property type="match status" value="1"/>
</dbReference>
<dbReference type="Pfam" id="PF06005">
    <property type="entry name" value="ZapB"/>
    <property type="match status" value="1"/>
</dbReference>
<keyword id="KW-0131">Cell cycle</keyword>
<keyword id="KW-0132">Cell division</keyword>
<keyword id="KW-0175">Coiled coil</keyword>
<keyword id="KW-0963">Cytoplasm</keyword>
<keyword id="KW-0717">Septation</keyword>
<accession>A9MZH7</accession>
<evidence type="ECO:0000255" key="1">
    <source>
        <dbReference type="HAMAP-Rule" id="MF_01196"/>
    </source>
</evidence>
<evidence type="ECO:0000256" key="2">
    <source>
        <dbReference type="SAM" id="MobiDB-lite"/>
    </source>
</evidence>
<organism>
    <name type="scientific">Salmonella paratyphi B (strain ATCC BAA-1250 / SPB7)</name>
    <dbReference type="NCBI Taxonomy" id="1016998"/>
    <lineage>
        <taxon>Bacteria</taxon>
        <taxon>Pseudomonadati</taxon>
        <taxon>Pseudomonadota</taxon>
        <taxon>Gammaproteobacteria</taxon>
        <taxon>Enterobacterales</taxon>
        <taxon>Enterobacteriaceae</taxon>
        <taxon>Salmonella</taxon>
    </lineage>
</organism>